<gene>
    <name evidence="1" type="primary">nuoB</name>
    <name type="ordered locus">RAF_ORF0451</name>
</gene>
<evidence type="ECO:0000255" key="1">
    <source>
        <dbReference type="HAMAP-Rule" id="MF_01356"/>
    </source>
</evidence>
<name>NUOB_RICAE</name>
<sequence length="174" mass="19646">MKNNFYQEDELLSNELSNRGFLLTKVDDVIGWARANSLWPMTFGLACCAVEMMQAAASRYDMDRFGMLFRPSPRQSDLMIVAGTLTNKMAPALRKVYDQMTEPKWVLSMGSCANGGGYYHFSYSVVRGCDRIVPVDVYVPGCPPTAEALIYGLMQLQKKIKRTTGFKYDARQTH</sequence>
<protein>
    <recommendedName>
        <fullName evidence="1">NADH-quinone oxidoreductase subunit B</fullName>
        <ecNumber evidence="1">7.1.1.-</ecNumber>
    </recommendedName>
    <alternativeName>
        <fullName evidence="1">NADH dehydrogenase I subunit B</fullName>
    </alternativeName>
    <alternativeName>
        <fullName evidence="1">NDH-1 subunit B</fullName>
    </alternativeName>
</protein>
<accession>C3PN71</accession>
<reference key="1">
    <citation type="journal article" date="2009" name="BMC Genomics">
        <title>Analysis of the Rickettsia africae genome reveals that virulence acquisition in Rickettsia species may be explained by genome reduction.</title>
        <authorList>
            <person name="Fournier P.-E."/>
            <person name="El Karkouri K."/>
            <person name="Leroy Q."/>
            <person name="Robert C."/>
            <person name="Giumelli B."/>
            <person name="Renesto P."/>
            <person name="Socolovschi C."/>
            <person name="Parola P."/>
            <person name="Audic S."/>
            <person name="Raoult D."/>
        </authorList>
    </citation>
    <scope>NUCLEOTIDE SEQUENCE [LARGE SCALE GENOMIC DNA]</scope>
    <source>
        <strain>ESF-5</strain>
    </source>
</reference>
<comment type="function">
    <text evidence="1">NDH-1 shuttles electrons from NADH, via FMN and iron-sulfur (Fe-S) centers, to quinones in the respiratory chain. The immediate electron acceptor for the enzyme in this species is believed to be ubiquinone. Couples the redox reaction to proton translocation (for every two electrons transferred, four hydrogen ions are translocated across the cytoplasmic membrane), and thus conserves the redox energy in a proton gradient.</text>
</comment>
<comment type="catalytic activity">
    <reaction evidence="1">
        <text>a quinone + NADH + 5 H(+)(in) = a quinol + NAD(+) + 4 H(+)(out)</text>
        <dbReference type="Rhea" id="RHEA:57888"/>
        <dbReference type="ChEBI" id="CHEBI:15378"/>
        <dbReference type="ChEBI" id="CHEBI:24646"/>
        <dbReference type="ChEBI" id="CHEBI:57540"/>
        <dbReference type="ChEBI" id="CHEBI:57945"/>
        <dbReference type="ChEBI" id="CHEBI:132124"/>
    </reaction>
</comment>
<comment type="cofactor">
    <cofactor evidence="1">
        <name>[4Fe-4S] cluster</name>
        <dbReference type="ChEBI" id="CHEBI:49883"/>
    </cofactor>
    <text evidence="1">Binds 1 [4Fe-4S] cluster.</text>
</comment>
<comment type="subunit">
    <text evidence="1">NDH-1 is composed of 14 different subunits. Subunits NuoB, C, D, E, F, and G constitute the peripheral sector of the complex.</text>
</comment>
<comment type="subcellular location">
    <subcellularLocation>
        <location evidence="1">Cell membrane</location>
        <topology evidence="1">Peripheral membrane protein</topology>
        <orientation evidence="1">Cytoplasmic side</orientation>
    </subcellularLocation>
</comment>
<comment type="similarity">
    <text evidence="1">Belongs to the complex I 20 kDa subunit family.</text>
</comment>
<keyword id="KW-0004">4Fe-4S</keyword>
<keyword id="KW-1003">Cell membrane</keyword>
<keyword id="KW-0408">Iron</keyword>
<keyword id="KW-0411">Iron-sulfur</keyword>
<keyword id="KW-0472">Membrane</keyword>
<keyword id="KW-0479">Metal-binding</keyword>
<keyword id="KW-0520">NAD</keyword>
<keyword id="KW-0874">Quinone</keyword>
<keyword id="KW-1278">Translocase</keyword>
<keyword id="KW-0813">Transport</keyword>
<keyword id="KW-0830">Ubiquinone</keyword>
<proteinExistence type="inferred from homology"/>
<feature type="chain" id="PRO_1000214865" description="NADH-quinone oxidoreductase subunit B">
    <location>
        <begin position="1"/>
        <end position="174"/>
    </location>
</feature>
<feature type="binding site" evidence="1">
    <location>
        <position position="47"/>
    </location>
    <ligand>
        <name>[4Fe-4S] cluster</name>
        <dbReference type="ChEBI" id="CHEBI:49883"/>
    </ligand>
</feature>
<feature type="binding site" evidence="1">
    <location>
        <position position="48"/>
    </location>
    <ligand>
        <name>[4Fe-4S] cluster</name>
        <dbReference type="ChEBI" id="CHEBI:49883"/>
    </ligand>
</feature>
<feature type="binding site" evidence="1">
    <location>
        <position position="112"/>
    </location>
    <ligand>
        <name>[4Fe-4S] cluster</name>
        <dbReference type="ChEBI" id="CHEBI:49883"/>
    </ligand>
</feature>
<feature type="binding site" evidence="1">
    <location>
        <position position="142"/>
    </location>
    <ligand>
        <name>[4Fe-4S] cluster</name>
        <dbReference type="ChEBI" id="CHEBI:49883"/>
    </ligand>
</feature>
<organism>
    <name type="scientific">Rickettsia africae (strain ESF-5)</name>
    <dbReference type="NCBI Taxonomy" id="347255"/>
    <lineage>
        <taxon>Bacteria</taxon>
        <taxon>Pseudomonadati</taxon>
        <taxon>Pseudomonadota</taxon>
        <taxon>Alphaproteobacteria</taxon>
        <taxon>Rickettsiales</taxon>
        <taxon>Rickettsiaceae</taxon>
        <taxon>Rickettsieae</taxon>
        <taxon>Rickettsia</taxon>
        <taxon>spotted fever group</taxon>
    </lineage>
</organism>
<dbReference type="EC" id="7.1.1.-" evidence="1"/>
<dbReference type="EMBL" id="CP001612">
    <property type="protein sequence ID" value="ACP53381.1"/>
    <property type="molecule type" value="Genomic_DNA"/>
</dbReference>
<dbReference type="RefSeq" id="WP_012719613.1">
    <property type="nucleotide sequence ID" value="NC_012633.1"/>
</dbReference>
<dbReference type="SMR" id="C3PN71"/>
<dbReference type="KEGG" id="raf:RAF_ORF0451"/>
<dbReference type="HOGENOM" id="CLU_055737_7_3_5"/>
<dbReference type="Proteomes" id="UP000002305">
    <property type="component" value="Chromosome"/>
</dbReference>
<dbReference type="GO" id="GO:0005886">
    <property type="term" value="C:plasma membrane"/>
    <property type="evidence" value="ECO:0007669"/>
    <property type="project" value="UniProtKB-SubCell"/>
</dbReference>
<dbReference type="GO" id="GO:0045271">
    <property type="term" value="C:respiratory chain complex I"/>
    <property type="evidence" value="ECO:0007669"/>
    <property type="project" value="TreeGrafter"/>
</dbReference>
<dbReference type="GO" id="GO:0051539">
    <property type="term" value="F:4 iron, 4 sulfur cluster binding"/>
    <property type="evidence" value="ECO:0007669"/>
    <property type="project" value="UniProtKB-KW"/>
</dbReference>
<dbReference type="GO" id="GO:0005506">
    <property type="term" value="F:iron ion binding"/>
    <property type="evidence" value="ECO:0007669"/>
    <property type="project" value="UniProtKB-UniRule"/>
</dbReference>
<dbReference type="GO" id="GO:0008137">
    <property type="term" value="F:NADH dehydrogenase (ubiquinone) activity"/>
    <property type="evidence" value="ECO:0007669"/>
    <property type="project" value="InterPro"/>
</dbReference>
<dbReference type="GO" id="GO:0050136">
    <property type="term" value="F:NADH:ubiquinone reductase (non-electrogenic) activity"/>
    <property type="evidence" value="ECO:0007669"/>
    <property type="project" value="UniProtKB-UniRule"/>
</dbReference>
<dbReference type="GO" id="GO:0048038">
    <property type="term" value="F:quinone binding"/>
    <property type="evidence" value="ECO:0007669"/>
    <property type="project" value="UniProtKB-KW"/>
</dbReference>
<dbReference type="GO" id="GO:0009060">
    <property type="term" value="P:aerobic respiration"/>
    <property type="evidence" value="ECO:0007669"/>
    <property type="project" value="TreeGrafter"/>
</dbReference>
<dbReference type="GO" id="GO:0015990">
    <property type="term" value="P:electron transport coupled proton transport"/>
    <property type="evidence" value="ECO:0007669"/>
    <property type="project" value="TreeGrafter"/>
</dbReference>
<dbReference type="FunFam" id="3.40.50.12280:FF:000001">
    <property type="entry name" value="NADH-quinone oxidoreductase subunit B 2"/>
    <property type="match status" value="1"/>
</dbReference>
<dbReference type="Gene3D" id="3.40.50.12280">
    <property type="match status" value="1"/>
</dbReference>
<dbReference type="HAMAP" id="MF_01356">
    <property type="entry name" value="NDH1_NuoB"/>
    <property type="match status" value="1"/>
</dbReference>
<dbReference type="InterPro" id="IPR006137">
    <property type="entry name" value="NADH_UbQ_OxRdtase-like_20kDa"/>
</dbReference>
<dbReference type="InterPro" id="IPR006138">
    <property type="entry name" value="NADH_UQ_OxRdtase_20Kd_su"/>
</dbReference>
<dbReference type="NCBIfam" id="TIGR01957">
    <property type="entry name" value="nuoB_fam"/>
    <property type="match status" value="1"/>
</dbReference>
<dbReference type="NCBIfam" id="NF005012">
    <property type="entry name" value="PRK06411.1"/>
    <property type="match status" value="1"/>
</dbReference>
<dbReference type="PANTHER" id="PTHR11995">
    <property type="entry name" value="NADH DEHYDROGENASE"/>
    <property type="match status" value="1"/>
</dbReference>
<dbReference type="PANTHER" id="PTHR11995:SF14">
    <property type="entry name" value="NADH DEHYDROGENASE [UBIQUINONE] IRON-SULFUR PROTEIN 7, MITOCHONDRIAL"/>
    <property type="match status" value="1"/>
</dbReference>
<dbReference type="Pfam" id="PF01058">
    <property type="entry name" value="Oxidored_q6"/>
    <property type="match status" value="1"/>
</dbReference>
<dbReference type="SUPFAM" id="SSF56770">
    <property type="entry name" value="HydA/Nqo6-like"/>
    <property type="match status" value="1"/>
</dbReference>
<dbReference type="PROSITE" id="PS01150">
    <property type="entry name" value="COMPLEX1_20K"/>
    <property type="match status" value="1"/>
</dbReference>